<gene>
    <name type="primary">Mdh1</name>
    <name type="synonym">Mdh</name>
</gene>
<organism>
    <name type="scientific">Rattus norvegicus</name>
    <name type="common">Rat</name>
    <dbReference type="NCBI Taxonomy" id="10116"/>
    <lineage>
        <taxon>Eukaryota</taxon>
        <taxon>Metazoa</taxon>
        <taxon>Chordata</taxon>
        <taxon>Craniata</taxon>
        <taxon>Vertebrata</taxon>
        <taxon>Euteleostomi</taxon>
        <taxon>Mammalia</taxon>
        <taxon>Eutheria</taxon>
        <taxon>Euarchontoglires</taxon>
        <taxon>Glires</taxon>
        <taxon>Rodentia</taxon>
        <taxon>Myomorpha</taxon>
        <taxon>Muroidea</taxon>
        <taxon>Muridae</taxon>
        <taxon>Murinae</taxon>
        <taxon>Rattus</taxon>
    </lineage>
</organism>
<accession>O88989</accession>
<accession>O88585</accession>
<accession>Q6PCV2</accession>
<evidence type="ECO:0000250" key="1">
    <source>
        <dbReference type="UniProtKB" id="P11708"/>
    </source>
</evidence>
<evidence type="ECO:0000250" key="2">
    <source>
        <dbReference type="UniProtKB" id="P14152"/>
    </source>
</evidence>
<evidence type="ECO:0000250" key="3">
    <source>
        <dbReference type="UniProtKB" id="P40925"/>
    </source>
</evidence>
<evidence type="ECO:0000305" key="4"/>
<evidence type="ECO:0007744" key="5">
    <source>
    </source>
</evidence>
<feature type="initiator methionine" description="Removed" evidence="3">
    <location>
        <position position="1"/>
    </location>
</feature>
<feature type="chain" id="PRO_0000226737" description="Malate dehydrogenase, cytoplasmic">
    <location>
        <begin position="2"/>
        <end position="334"/>
    </location>
</feature>
<feature type="active site" description="Proton acceptor" evidence="1">
    <location>
        <position position="187"/>
    </location>
</feature>
<feature type="binding site" evidence="1">
    <location>
        <begin position="11"/>
        <end position="17"/>
    </location>
    <ligand>
        <name>NAD(+)</name>
        <dbReference type="ChEBI" id="CHEBI:57540"/>
    </ligand>
</feature>
<feature type="binding site" evidence="1">
    <location>
        <position position="42"/>
    </location>
    <ligand>
        <name>NAD(+)</name>
        <dbReference type="ChEBI" id="CHEBI:57540"/>
    </ligand>
</feature>
<feature type="binding site" evidence="1">
    <location>
        <position position="92"/>
    </location>
    <ligand>
        <name>substrate</name>
    </ligand>
</feature>
<feature type="binding site" evidence="1">
    <location>
        <position position="98"/>
    </location>
    <ligand>
        <name>substrate</name>
    </ligand>
</feature>
<feature type="binding site" evidence="1">
    <location>
        <position position="105"/>
    </location>
    <ligand>
        <name>NAD(+)</name>
        <dbReference type="ChEBI" id="CHEBI:57540"/>
    </ligand>
</feature>
<feature type="binding site" evidence="1">
    <location>
        <position position="112"/>
    </location>
    <ligand>
        <name>NAD(+)</name>
        <dbReference type="ChEBI" id="CHEBI:57540"/>
    </ligand>
</feature>
<feature type="binding site" evidence="1">
    <location>
        <begin position="129"/>
        <end position="131"/>
    </location>
    <ligand>
        <name>NAD(+)</name>
        <dbReference type="ChEBI" id="CHEBI:57540"/>
    </ligand>
</feature>
<feature type="binding site" evidence="1">
    <location>
        <position position="131"/>
    </location>
    <ligand>
        <name>substrate</name>
    </ligand>
</feature>
<feature type="binding site" evidence="1">
    <location>
        <position position="162"/>
    </location>
    <ligand>
        <name>substrate</name>
    </ligand>
</feature>
<feature type="modified residue" description="N-acetylserine" evidence="3">
    <location>
        <position position="2"/>
    </location>
</feature>
<feature type="modified residue" description="N6-succinyllysine" evidence="2">
    <location>
        <position position="110"/>
    </location>
</feature>
<feature type="modified residue" description="N6-acetyllysine" evidence="3">
    <location>
        <position position="118"/>
    </location>
</feature>
<feature type="modified residue" description="N6-acetyllysine" evidence="3">
    <location>
        <position position="121"/>
    </location>
</feature>
<feature type="modified residue" description="N6-succinyllysine" evidence="2">
    <location>
        <position position="214"/>
    </location>
</feature>
<feature type="modified residue" description="Phosphoserine" evidence="5">
    <location>
        <position position="217"/>
    </location>
</feature>
<feature type="modified residue" description="Omega-N-methylarginine" evidence="2">
    <location>
        <position position="230"/>
    </location>
</feature>
<feature type="modified residue" description="Phosphoserine" evidence="5">
    <location>
        <position position="241"/>
    </location>
</feature>
<feature type="modified residue" description="N6-acetyllysine; alternate" evidence="3">
    <location>
        <position position="298"/>
    </location>
</feature>
<feature type="modified residue" description="N6-succinyllysine; alternate" evidence="2">
    <location>
        <position position="298"/>
    </location>
</feature>
<feature type="modified residue" description="Phosphoserine" evidence="2">
    <location>
        <position position="309"/>
    </location>
</feature>
<feature type="modified residue" description="N6-succinyllysine" evidence="2">
    <location>
        <position position="318"/>
    </location>
</feature>
<feature type="modified residue" description="Phosphoserine" evidence="5">
    <location>
        <position position="332"/>
    </location>
</feature>
<feature type="modified residue" description="Phosphoserine" evidence="5">
    <location>
        <position position="333"/>
    </location>
</feature>
<feature type="sequence conflict" description="In Ref. 4; AAC26799." evidence="4" ref="4">
    <original>S</original>
    <variation>A</variation>
    <location>
        <position position="251"/>
    </location>
</feature>
<feature type="sequence conflict" description="In Ref. 2; AAH59124." evidence="4" ref="2">
    <original>N</original>
    <variation>D</variation>
    <location>
        <position position="276"/>
    </location>
</feature>
<name>MDHC_RAT</name>
<proteinExistence type="evidence at protein level"/>
<protein>
    <recommendedName>
        <fullName>Malate dehydrogenase, cytoplasmic</fullName>
        <ecNumber>1.1.1.37</ecNumber>
    </recommendedName>
    <alternativeName>
        <fullName evidence="4">Aromatic alpha-keto acid reductase</fullName>
        <shortName evidence="4">KAR</shortName>
        <ecNumber evidence="3">1.1.1.96</ecNumber>
    </alternativeName>
    <alternativeName>
        <fullName>Cytosolic malate dehydrogenase</fullName>
    </alternativeName>
</protein>
<sequence length="334" mass="36483">MSEPIRVLVTGAAGQIAYSLLYSIGNGSVFGKDQPIILVLLDITPMMGVLDGVLMELQDCALPLLQDVIATDKEEVAFKDLDVAVLVGSMPRREGMERKDLLKANVKIFKSQGAALEKYAKKSVKVIVVGNPANTNCLTASKSAPSIPKENFSCLTRLDHNRAKSQIALKLGVTADDVKNVIIWGNHSSTQYPDVNHAKVKLQGKEVGVYEALKDDSWLKGEFITTVQQRGAAVIKARKLSSAMSAAKAISDHIRDIWFGTPEGEFVSMGVISDGNSYGVPDDLLYSFPVVIKNKTWKFVEGLPINDFSREKMDLTAKELTEEKETAFEFLSSA</sequence>
<comment type="function">
    <text evidence="3">Catalyzes the reduction of aromatic alpha-keto acids in the presence of NADH. Plays essential roles in the malate-aspartate shuttle and the tricarboxylic acid cycle, important in mitochondrial NADH supply for oxidative phosphorylation. Catalyzes the reduction of 2-oxoglutarate to 2-hydroxyglutarate, leading to elevated reactive oxygen species (ROS).</text>
</comment>
<comment type="catalytic activity">
    <reaction evidence="3">
        <text>(S)-malate + NAD(+) = oxaloacetate + NADH + H(+)</text>
        <dbReference type="Rhea" id="RHEA:21432"/>
        <dbReference type="ChEBI" id="CHEBI:15378"/>
        <dbReference type="ChEBI" id="CHEBI:15589"/>
        <dbReference type="ChEBI" id="CHEBI:16452"/>
        <dbReference type="ChEBI" id="CHEBI:57540"/>
        <dbReference type="ChEBI" id="CHEBI:57945"/>
        <dbReference type="EC" id="1.1.1.37"/>
    </reaction>
    <physiologicalReaction direction="left-to-right" evidence="3">
        <dbReference type="Rhea" id="RHEA:21433"/>
    </physiologicalReaction>
    <physiologicalReaction direction="right-to-left" evidence="3">
        <dbReference type="Rhea" id="RHEA:21434"/>
    </physiologicalReaction>
</comment>
<comment type="catalytic activity">
    <reaction evidence="3">
        <text>(2R)-2-hydroxy-3-(4-hydroxyphenyl)propanoate + NAD(+) = 3-(4-hydroxyphenyl)pyruvate + NADH + H(+)</text>
        <dbReference type="Rhea" id="RHEA:10780"/>
        <dbReference type="ChEBI" id="CHEBI:10980"/>
        <dbReference type="ChEBI" id="CHEBI:15378"/>
        <dbReference type="ChEBI" id="CHEBI:36242"/>
        <dbReference type="ChEBI" id="CHEBI:57540"/>
        <dbReference type="ChEBI" id="CHEBI:57945"/>
        <dbReference type="EC" id="1.1.1.96"/>
    </reaction>
    <physiologicalReaction direction="right-to-left" evidence="3">
        <dbReference type="Rhea" id="RHEA:10782"/>
    </physiologicalReaction>
</comment>
<comment type="catalytic activity">
    <reaction evidence="3">
        <text>(S)-2-hydroxyglutarate + NAD(+) = 2-oxoglutarate + NADH + H(+)</text>
        <dbReference type="Rhea" id="RHEA:57172"/>
        <dbReference type="ChEBI" id="CHEBI:15378"/>
        <dbReference type="ChEBI" id="CHEBI:16782"/>
        <dbReference type="ChEBI" id="CHEBI:16810"/>
        <dbReference type="ChEBI" id="CHEBI:57540"/>
        <dbReference type="ChEBI" id="CHEBI:57945"/>
    </reaction>
    <physiologicalReaction direction="right-to-left" evidence="3">
        <dbReference type="Rhea" id="RHEA:57174"/>
    </physiologicalReaction>
</comment>
<comment type="subunit">
    <text evidence="1">Homodimer.</text>
</comment>
<comment type="subcellular location">
    <subcellularLocation>
        <location evidence="3">Cytoplasm</location>
        <location evidence="3">Cytosol</location>
    </subcellularLocation>
</comment>
<comment type="PTM">
    <text evidence="3">ISGylated.</text>
</comment>
<comment type="PTM">
    <text evidence="3">Acetylation at Lys-118 dramatically enhances enzymatic activity and promotes adipogenic differentiation.</text>
</comment>
<comment type="similarity">
    <text evidence="4">Belongs to the LDH/MDH superfamily. MDH type 2 family.</text>
</comment>
<dbReference type="EC" id="1.1.1.37"/>
<dbReference type="EC" id="1.1.1.96" evidence="3"/>
<dbReference type="EMBL" id="AF093773">
    <property type="protein sequence ID" value="AAC64180.1"/>
    <property type="molecule type" value="mRNA"/>
</dbReference>
<dbReference type="EMBL" id="BC059124">
    <property type="protein sequence ID" value="AAH59124.1"/>
    <property type="molecule type" value="mRNA"/>
</dbReference>
<dbReference type="EMBL" id="AF075574">
    <property type="protein sequence ID" value="AAC26799.1"/>
    <property type="molecule type" value="mRNA"/>
</dbReference>
<dbReference type="RefSeq" id="NP_150238.1">
    <property type="nucleotide sequence ID" value="NM_033235.2"/>
</dbReference>
<dbReference type="SMR" id="O88989"/>
<dbReference type="BioGRID" id="246700">
    <property type="interactions" value="6"/>
</dbReference>
<dbReference type="CORUM" id="O88989"/>
<dbReference type="FunCoup" id="O88989">
    <property type="interactions" value="2083"/>
</dbReference>
<dbReference type="IntAct" id="O88989">
    <property type="interactions" value="2"/>
</dbReference>
<dbReference type="STRING" id="10116.ENSRNOP00000011429"/>
<dbReference type="GlyGen" id="O88989">
    <property type="glycosylation" value="1 site, 1 O-linked glycan (1 site)"/>
</dbReference>
<dbReference type="iPTMnet" id="O88989"/>
<dbReference type="PhosphoSitePlus" id="O88989"/>
<dbReference type="SwissPalm" id="O88989"/>
<dbReference type="jPOST" id="O88989"/>
<dbReference type="PaxDb" id="10116-ENSRNOP00000011429"/>
<dbReference type="Ensembl" id="ENSRNOT00000011429.8">
    <property type="protein sequence ID" value="ENSRNOP00000011429.5"/>
    <property type="gene ID" value="ENSRNOG00000008103.8"/>
</dbReference>
<dbReference type="GeneID" id="24551"/>
<dbReference type="KEGG" id="rno:24551"/>
<dbReference type="UCSC" id="RGD:3072">
    <property type="organism name" value="rat"/>
</dbReference>
<dbReference type="AGR" id="RGD:3072"/>
<dbReference type="CTD" id="4190"/>
<dbReference type="RGD" id="3072">
    <property type="gene designation" value="Mdh1"/>
</dbReference>
<dbReference type="eggNOG" id="KOG1496">
    <property type="taxonomic scope" value="Eukaryota"/>
</dbReference>
<dbReference type="GeneTree" id="ENSGT00530000063410"/>
<dbReference type="HOGENOM" id="CLU_040727_2_0_1"/>
<dbReference type="InParanoid" id="O88989"/>
<dbReference type="PhylomeDB" id="O88989"/>
<dbReference type="TreeFam" id="TF105826"/>
<dbReference type="Reactome" id="R-RNO-9856872">
    <property type="pathway name" value="Malate-aspartate shuttle"/>
</dbReference>
<dbReference type="PRO" id="PR:O88989"/>
<dbReference type="Proteomes" id="UP000002494">
    <property type="component" value="Chromosome 14"/>
</dbReference>
<dbReference type="Bgee" id="ENSRNOG00000008103">
    <property type="expression patterns" value="Expressed in heart and 20 other cell types or tissues"/>
</dbReference>
<dbReference type="GO" id="GO:0005737">
    <property type="term" value="C:cytoplasm"/>
    <property type="evidence" value="ECO:0000266"/>
    <property type="project" value="RGD"/>
</dbReference>
<dbReference type="GO" id="GO:0005829">
    <property type="term" value="C:cytosol"/>
    <property type="evidence" value="ECO:0000266"/>
    <property type="project" value="RGD"/>
</dbReference>
<dbReference type="GO" id="GO:0047995">
    <property type="term" value="F:hydroxyphenylpyruvate reductase activity"/>
    <property type="evidence" value="ECO:0007669"/>
    <property type="project" value="RHEA"/>
</dbReference>
<dbReference type="GO" id="GO:0030060">
    <property type="term" value="F:L-malate dehydrogenase (NAD+) activity"/>
    <property type="evidence" value="ECO:0000314"/>
    <property type="project" value="RGD"/>
</dbReference>
<dbReference type="GO" id="GO:0016615">
    <property type="term" value="F:malate dehydrogenase activity"/>
    <property type="evidence" value="ECO:0000314"/>
    <property type="project" value="RGD"/>
</dbReference>
<dbReference type="GO" id="GO:0051287">
    <property type="term" value="F:NAD binding"/>
    <property type="evidence" value="ECO:0000314"/>
    <property type="project" value="RGD"/>
</dbReference>
<dbReference type="GO" id="GO:0006108">
    <property type="term" value="P:malate metabolic process"/>
    <property type="evidence" value="ECO:0000314"/>
    <property type="project" value="RGD"/>
</dbReference>
<dbReference type="GO" id="GO:0043490">
    <property type="term" value="P:malate-aspartate shuttle"/>
    <property type="evidence" value="ECO:0000266"/>
    <property type="project" value="RGD"/>
</dbReference>
<dbReference type="GO" id="GO:0019674">
    <property type="term" value="P:NAD metabolic process"/>
    <property type="evidence" value="ECO:0000314"/>
    <property type="project" value="RGD"/>
</dbReference>
<dbReference type="GO" id="GO:0006734">
    <property type="term" value="P:NADH metabolic process"/>
    <property type="evidence" value="ECO:0000314"/>
    <property type="project" value="RGD"/>
</dbReference>
<dbReference type="GO" id="GO:0006739">
    <property type="term" value="P:NADP metabolic process"/>
    <property type="evidence" value="ECO:0000266"/>
    <property type="project" value="RGD"/>
</dbReference>
<dbReference type="GO" id="GO:0006107">
    <property type="term" value="P:oxaloacetate metabolic process"/>
    <property type="evidence" value="ECO:0000314"/>
    <property type="project" value="RGD"/>
</dbReference>
<dbReference type="GO" id="GO:0006099">
    <property type="term" value="P:tricarboxylic acid cycle"/>
    <property type="evidence" value="ECO:0000318"/>
    <property type="project" value="GO_Central"/>
</dbReference>
<dbReference type="CDD" id="cd01336">
    <property type="entry name" value="MDH_cytoplasmic_cytosolic"/>
    <property type="match status" value="1"/>
</dbReference>
<dbReference type="FunFam" id="3.40.50.720:FF:000010">
    <property type="entry name" value="Malate dehydrogenase"/>
    <property type="match status" value="1"/>
</dbReference>
<dbReference type="FunFam" id="3.90.110.10:FF:000002">
    <property type="entry name" value="Malate dehydrogenase"/>
    <property type="match status" value="1"/>
</dbReference>
<dbReference type="Gene3D" id="3.90.110.10">
    <property type="entry name" value="Lactate dehydrogenase/glycoside hydrolase, family 4, C-terminal"/>
    <property type="match status" value="1"/>
</dbReference>
<dbReference type="Gene3D" id="3.40.50.720">
    <property type="entry name" value="NAD(P)-binding Rossmann-like Domain"/>
    <property type="match status" value="1"/>
</dbReference>
<dbReference type="HAMAP" id="MF_01517">
    <property type="entry name" value="Malate_dehydrog_2"/>
    <property type="match status" value="1"/>
</dbReference>
<dbReference type="InterPro" id="IPR001557">
    <property type="entry name" value="L-lactate/malate_DH"/>
</dbReference>
<dbReference type="InterPro" id="IPR022383">
    <property type="entry name" value="Lactate/malate_DH_C"/>
</dbReference>
<dbReference type="InterPro" id="IPR001236">
    <property type="entry name" value="Lactate/malate_DH_N"/>
</dbReference>
<dbReference type="InterPro" id="IPR015955">
    <property type="entry name" value="Lactate_DH/Glyco_Ohase_4_C"/>
</dbReference>
<dbReference type="InterPro" id="IPR001252">
    <property type="entry name" value="Malate_DH_AS"/>
</dbReference>
<dbReference type="InterPro" id="IPR011274">
    <property type="entry name" value="Malate_DH_NAD-dep_euk"/>
</dbReference>
<dbReference type="InterPro" id="IPR010945">
    <property type="entry name" value="Malate_DH_type2"/>
</dbReference>
<dbReference type="InterPro" id="IPR036291">
    <property type="entry name" value="NAD(P)-bd_dom_sf"/>
</dbReference>
<dbReference type="NCBIfam" id="TIGR01759">
    <property type="entry name" value="MalateDH-SF1"/>
    <property type="match status" value="1"/>
</dbReference>
<dbReference type="NCBIfam" id="TIGR01758">
    <property type="entry name" value="MDH_euk_cyt"/>
    <property type="match status" value="1"/>
</dbReference>
<dbReference type="NCBIfam" id="NF003916">
    <property type="entry name" value="PRK05442.1"/>
    <property type="match status" value="1"/>
</dbReference>
<dbReference type="PANTHER" id="PTHR23382">
    <property type="entry name" value="MALATE DEHYDROGENASE"/>
    <property type="match status" value="1"/>
</dbReference>
<dbReference type="Pfam" id="PF02866">
    <property type="entry name" value="Ldh_1_C"/>
    <property type="match status" value="1"/>
</dbReference>
<dbReference type="Pfam" id="PF00056">
    <property type="entry name" value="Ldh_1_N"/>
    <property type="match status" value="1"/>
</dbReference>
<dbReference type="PIRSF" id="PIRSF000102">
    <property type="entry name" value="Lac_mal_DH"/>
    <property type="match status" value="1"/>
</dbReference>
<dbReference type="SUPFAM" id="SSF56327">
    <property type="entry name" value="LDH C-terminal domain-like"/>
    <property type="match status" value="1"/>
</dbReference>
<dbReference type="SUPFAM" id="SSF51735">
    <property type="entry name" value="NAD(P)-binding Rossmann-fold domains"/>
    <property type="match status" value="1"/>
</dbReference>
<dbReference type="PROSITE" id="PS00068">
    <property type="entry name" value="MDH"/>
    <property type="match status" value="1"/>
</dbReference>
<keyword id="KW-0007">Acetylation</keyword>
<keyword id="KW-0963">Cytoplasm</keyword>
<keyword id="KW-0903">Direct protein sequencing</keyword>
<keyword id="KW-0488">Methylation</keyword>
<keyword id="KW-0520">NAD</keyword>
<keyword id="KW-0560">Oxidoreductase</keyword>
<keyword id="KW-0597">Phosphoprotein</keyword>
<keyword id="KW-1185">Reference proteome</keyword>
<keyword id="KW-0816">Tricarboxylic acid cycle</keyword>
<keyword id="KW-0832">Ubl conjugation</keyword>
<reference key="1">
    <citation type="submission" date="1998-09" db="EMBL/GenBank/DDBJ databases">
        <title>Cloning of rat cytosolic malate dehydrogenase.</title>
        <authorList>
            <person name="Achenbach P."/>
            <person name="Steinbrenner H."/>
            <person name="Reindl G."/>
            <person name="Seissler J."/>
        </authorList>
    </citation>
    <scope>NUCLEOTIDE SEQUENCE [MRNA]</scope>
</reference>
<reference key="2">
    <citation type="journal article" date="2004" name="Genome Res.">
        <title>The status, quality, and expansion of the NIH full-length cDNA project: the Mammalian Gene Collection (MGC).</title>
        <authorList>
            <consortium name="The MGC Project Team"/>
        </authorList>
    </citation>
    <scope>NUCLEOTIDE SEQUENCE [LARGE SCALE MRNA]</scope>
    <source>
        <tissue>Pituitary</tissue>
    </source>
</reference>
<reference key="3">
    <citation type="submission" date="2007-07" db="UniProtKB">
        <authorList>
            <person name="Lubec G."/>
            <person name="Afjehi-Sadat L."/>
            <person name="Diao W."/>
            <person name="Kang S.U."/>
        </authorList>
    </citation>
    <scope>PROTEIN SEQUENCE OF 7-32; 80-92; 126-157; 171-199; 206-230; 239-255; 299-310 AND 319-334</scope>
    <scope>IDENTIFICATION BY MASS SPECTROMETRY</scope>
    <source>
        <strain>Sprague-Dawley</strain>
        <tissue>Brain</tissue>
        <tissue>Hippocampus</tissue>
        <tissue>Spinal cord</tissue>
    </source>
</reference>
<reference key="4">
    <citation type="submission" date="1998-06" db="EMBL/GenBank/DDBJ databases">
        <title>Partial sequence of rat malate dehydrogenase (MDH) mRNA.</title>
        <authorList>
            <person name="Earley S."/>
        </authorList>
    </citation>
    <scope>NUCLEOTIDE SEQUENCE [MRNA] OF 251-284</scope>
</reference>
<reference key="5">
    <citation type="journal article" date="2012" name="Nat. Commun.">
        <title>Quantitative maps of protein phosphorylation sites across 14 different rat organs and tissues.</title>
        <authorList>
            <person name="Lundby A."/>
            <person name="Secher A."/>
            <person name="Lage K."/>
            <person name="Nordsborg N.B."/>
            <person name="Dmytriyev A."/>
            <person name="Lundby C."/>
            <person name="Olsen J.V."/>
        </authorList>
    </citation>
    <scope>PHOSPHORYLATION [LARGE SCALE ANALYSIS] AT SER-217; SER-241; SER-332 AND SER-333</scope>
    <scope>IDENTIFICATION BY MASS SPECTROMETRY [LARGE SCALE ANALYSIS]</scope>
</reference>